<gene>
    <name type="primary">PH</name>
    <name type="synonym">P29</name>
    <name type="synonym">POLH</name>
    <name type="ORF">ORF3</name>
</gene>
<comment type="function">
    <text>Major component of the virus occlusion bodies, which are large proteinaceous structures (polyhedra), that protect the virus from the outside environment for extended periods until they are ingested by insect larvae.</text>
</comment>
<comment type="similarity">
    <text evidence="1">Belongs to the polyhedrin family.</text>
</comment>
<evidence type="ECO:0000305" key="1"/>
<keyword id="KW-1185">Reference proteome</keyword>
<keyword id="KW-0842">Viral occlusion body</keyword>
<protein>
    <recommendedName>
        <fullName>Polyhedrin</fullName>
    </recommendedName>
    <alternativeName>
        <fullName>Major occlusion protein</fullName>
    </alternativeName>
</protein>
<organism>
    <name type="scientific">Orgyia pseudotsugata multicapsid polyhedrosis virus</name>
    <name type="common">OpMNPV</name>
    <dbReference type="NCBI Taxonomy" id="262177"/>
    <lineage>
        <taxon>Viruses</taxon>
        <taxon>Viruses incertae sedis</taxon>
        <taxon>Naldaviricetes</taxon>
        <taxon>Lefavirales</taxon>
        <taxon>Baculoviridae</taxon>
        <taxon>Alphabaculovirus</taxon>
        <taxon>Alphabaculovirus orpseudotsugatae</taxon>
    </lineage>
</organism>
<dbReference type="EMBL" id="M14885">
    <property type="protein sequence ID" value="AAA64926.1"/>
    <property type="molecule type" value="Genomic_DNA"/>
</dbReference>
<dbReference type="EMBL" id="U75930">
    <property type="protein sequence ID" value="AAC59002.1"/>
    <property type="molecule type" value="Genomic_DNA"/>
</dbReference>
<dbReference type="PIR" id="A24188">
    <property type="entry name" value="PYNVPM"/>
</dbReference>
<dbReference type="RefSeq" id="NP_046159.1">
    <property type="nucleotide sequence ID" value="NC_001875.2"/>
</dbReference>
<dbReference type="SMR" id="P07488"/>
<dbReference type="KEGG" id="vg:912058"/>
<dbReference type="OrthoDB" id="6325at10239"/>
<dbReference type="Proteomes" id="UP000009248">
    <property type="component" value="Genome"/>
</dbReference>
<dbReference type="GO" id="GO:0039679">
    <property type="term" value="C:viral occlusion body"/>
    <property type="evidence" value="ECO:0007669"/>
    <property type="project" value="UniProtKB-KW"/>
</dbReference>
<dbReference type="GO" id="GO:0005198">
    <property type="term" value="F:structural molecule activity"/>
    <property type="evidence" value="ECO:0007669"/>
    <property type="project" value="InterPro"/>
</dbReference>
<dbReference type="InterPro" id="IPR001746">
    <property type="entry name" value="Polyhedrin"/>
</dbReference>
<dbReference type="Pfam" id="PF00738">
    <property type="entry name" value="Polyhedrin"/>
    <property type="match status" value="1"/>
</dbReference>
<organismHost>
    <name type="scientific">Orgyia pseudotsugata</name>
    <name type="common">Douglas-fir tussock moth</name>
    <dbReference type="NCBI Taxonomy" id="33414"/>
</organismHost>
<feature type="chain" id="PRO_0000217254" description="Polyhedrin">
    <location>
        <begin position="1"/>
        <end position="245"/>
    </location>
</feature>
<name>PYHD_NPVOP</name>
<reference key="1">
    <citation type="journal article" date="1986" name="Virology">
        <title>The nucleotide sequence of the polyhedrin gene region from the multicapsid baculovirus of Orgyia pseudotsugata.</title>
        <authorList>
            <person name="Leisy D."/>
            <person name="Rohrmann G."/>
            <person name="Beaudreau G.S."/>
        </authorList>
    </citation>
    <scope>NUCLEOTIDE SEQUENCE [GENOMIC DNA]</scope>
</reference>
<reference key="2">
    <citation type="journal article" date="1997" name="Virology">
        <title>The sequence of the Orgyia pseudotsugata multinucleocapsid nuclear polyhedrosis virus genome.</title>
        <authorList>
            <person name="Ahrens C.H."/>
            <person name="Russell R.R."/>
            <person name="Funk C.J."/>
            <person name="Evans J."/>
            <person name="Harwood S."/>
            <person name="Rohrmann G.F."/>
        </authorList>
    </citation>
    <scope>NUCLEOTIDE SEQUENCE [LARGE SCALE GENOMIC DNA]</scope>
</reference>
<sequence length="245" mass="28818">MPDYSYRPTIGRTYVYDNKYYKNLGSVIKNAKRKKHLLEHEEDEKHLDPLDHYMVAEDPFLGPGKNQKLTLFKEIRNVKPDTMKLIVNWSGKEFLRETWTRFVEDSFPIVNDQEVMDVFLVVNMRPTRPNRCYKFLAQHALRWDCDYVPHEVIRIVEPSYVGMNNEYRISLAKKGGGCPIMNIHAEYTNSFESFVNRVIWENFYKPIVYIGTDSSEEEEILIEVSLVFKVKEFAPDAPLFTGPAY</sequence>
<accession>P07488</accession>
<proteinExistence type="inferred from homology"/>